<protein>
    <recommendedName>
        <fullName evidence="1">Phosphopentomutase</fullName>
        <ecNumber evidence="1">5.4.2.7</ecNumber>
    </recommendedName>
    <alternativeName>
        <fullName evidence="1">Phosphodeoxyribomutase</fullName>
    </alternativeName>
</protein>
<proteinExistence type="inferred from homology"/>
<reference key="1">
    <citation type="journal article" date="2002" name="Proc. Natl. Acad. Sci. U.S.A.">
        <title>Genome sequence and comparative microarray analysis of serotype M18 group A Streptococcus strains associated with acute rheumatic fever outbreaks.</title>
        <authorList>
            <person name="Smoot J.C."/>
            <person name="Barbian K.D."/>
            <person name="Van Gompel J.J."/>
            <person name="Smoot L.M."/>
            <person name="Chaussee M.S."/>
            <person name="Sylva G.L."/>
            <person name="Sturdevant D.E."/>
            <person name="Ricklefs S.M."/>
            <person name="Porcella S.F."/>
            <person name="Parkins L.D."/>
            <person name="Beres S.B."/>
            <person name="Campbell D.S."/>
            <person name="Smith T.M."/>
            <person name="Zhang Q."/>
            <person name="Kapur V."/>
            <person name="Daly J.A."/>
            <person name="Veasy L.G."/>
            <person name="Musser J.M."/>
        </authorList>
    </citation>
    <scope>NUCLEOTIDE SEQUENCE [LARGE SCALE GENOMIC DNA]</scope>
    <source>
        <strain>MGAS8232</strain>
    </source>
</reference>
<keyword id="KW-0963">Cytoplasm</keyword>
<keyword id="KW-0413">Isomerase</keyword>
<keyword id="KW-0464">Manganese</keyword>
<keyword id="KW-0479">Metal-binding</keyword>
<accession>Q8P1C4</accession>
<comment type="function">
    <text evidence="1">Isomerase that catalyzes the conversion of deoxy-ribose 1-phosphate (dRib-1-P) and ribose 1-phosphate (Rib-1-P) to deoxy-ribose 5-phosphate (dRib-5-P) and ribose 5-phosphate (Rib-5-P), respectively.</text>
</comment>
<comment type="catalytic activity">
    <reaction evidence="1">
        <text>2-deoxy-alpha-D-ribose 1-phosphate = 2-deoxy-D-ribose 5-phosphate</text>
        <dbReference type="Rhea" id="RHEA:27658"/>
        <dbReference type="ChEBI" id="CHEBI:57259"/>
        <dbReference type="ChEBI" id="CHEBI:62877"/>
        <dbReference type="EC" id="5.4.2.7"/>
    </reaction>
</comment>
<comment type="catalytic activity">
    <reaction evidence="1">
        <text>alpha-D-ribose 1-phosphate = D-ribose 5-phosphate</text>
        <dbReference type="Rhea" id="RHEA:18793"/>
        <dbReference type="ChEBI" id="CHEBI:57720"/>
        <dbReference type="ChEBI" id="CHEBI:78346"/>
        <dbReference type="EC" id="5.4.2.7"/>
    </reaction>
</comment>
<comment type="cofactor">
    <cofactor evidence="1">
        <name>Mn(2+)</name>
        <dbReference type="ChEBI" id="CHEBI:29035"/>
    </cofactor>
    <text evidence="1">Binds 2 manganese ions.</text>
</comment>
<comment type="pathway">
    <text evidence="1">Carbohydrate degradation; 2-deoxy-D-ribose 1-phosphate degradation; D-glyceraldehyde 3-phosphate and acetaldehyde from 2-deoxy-alpha-D-ribose 1-phosphate: step 1/2.</text>
</comment>
<comment type="subcellular location">
    <subcellularLocation>
        <location evidence="1">Cytoplasm</location>
    </subcellularLocation>
</comment>
<comment type="similarity">
    <text evidence="1">Belongs to the phosphopentomutase family.</text>
</comment>
<name>DEOB_STRP8</name>
<dbReference type="EC" id="5.4.2.7" evidence="1"/>
<dbReference type="EMBL" id="AE009949">
    <property type="protein sequence ID" value="AAL97593.1"/>
    <property type="molecule type" value="Genomic_DNA"/>
</dbReference>
<dbReference type="RefSeq" id="WP_011017684.1">
    <property type="nucleotide sequence ID" value="NC_003485.1"/>
</dbReference>
<dbReference type="SMR" id="Q8P1C4"/>
<dbReference type="KEGG" id="spm:spyM18_0951"/>
<dbReference type="HOGENOM" id="CLU_053861_0_0_9"/>
<dbReference type="UniPathway" id="UPA00002">
    <property type="reaction ID" value="UER00467"/>
</dbReference>
<dbReference type="GO" id="GO:0005829">
    <property type="term" value="C:cytosol"/>
    <property type="evidence" value="ECO:0007669"/>
    <property type="project" value="TreeGrafter"/>
</dbReference>
<dbReference type="GO" id="GO:0000287">
    <property type="term" value="F:magnesium ion binding"/>
    <property type="evidence" value="ECO:0007669"/>
    <property type="project" value="InterPro"/>
</dbReference>
<dbReference type="GO" id="GO:0030145">
    <property type="term" value="F:manganese ion binding"/>
    <property type="evidence" value="ECO:0007669"/>
    <property type="project" value="UniProtKB-UniRule"/>
</dbReference>
<dbReference type="GO" id="GO:0008973">
    <property type="term" value="F:phosphopentomutase activity"/>
    <property type="evidence" value="ECO:0007669"/>
    <property type="project" value="UniProtKB-UniRule"/>
</dbReference>
<dbReference type="GO" id="GO:0006018">
    <property type="term" value="P:2-deoxyribose 1-phosphate catabolic process"/>
    <property type="evidence" value="ECO:0007669"/>
    <property type="project" value="UniProtKB-UniRule"/>
</dbReference>
<dbReference type="GO" id="GO:0006015">
    <property type="term" value="P:5-phosphoribose 1-diphosphate biosynthetic process"/>
    <property type="evidence" value="ECO:0007669"/>
    <property type="project" value="UniProtKB-UniPathway"/>
</dbReference>
<dbReference type="GO" id="GO:0043094">
    <property type="term" value="P:metabolic compound salvage"/>
    <property type="evidence" value="ECO:0007669"/>
    <property type="project" value="InterPro"/>
</dbReference>
<dbReference type="GO" id="GO:0009117">
    <property type="term" value="P:nucleotide metabolic process"/>
    <property type="evidence" value="ECO:0007669"/>
    <property type="project" value="InterPro"/>
</dbReference>
<dbReference type="CDD" id="cd16009">
    <property type="entry name" value="PPM"/>
    <property type="match status" value="1"/>
</dbReference>
<dbReference type="FunFam" id="3.30.70.1250:FF:000001">
    <property type="entry name" value="Phosphopentomutase"/>
    <property type="match status" value="1"/>
</dbReference>
<dbReference type="Gene3D" id="3.40.720.10">
    <property type="entry name" value="Alkaline Phosphatase, subunit A"/>
    <property type="match status" value="1"/>
</dbReference>
<dbReference type="Gene3D" id="3.30.70.1250">
    <property type="entry name" value="Phosphopentomutase"/>
    <property type="match status" value="1"/>
</dbReference>
<dbReference type="HAMAP" id="MF_00740">
    <property type="entry name" value="Phosphopentomut"/>
    <property type="match status" value="1"/>
</dbReference>
<dbReference type="InterPro" id="IPR017850">
    <property type="entry name" value="Alkaline_phosphatase_core_sf"/>
</dbReference>
<dbReference type="InterPro" id="IPR010045">
    <property type="entry name" value="DeoB"/>
</dbReference>
<dbReference type="InterPro" id="IPR006124">
    <property type="entry name" value="Metalloenzyme"/>
</dbReference>
<dbReference type="InterPro" id="IPR024052">
    <property type="entry name" value="Phosphopentomutase_DeoB_cap_sf"/>
</dbReference>
<dbReference type="NCBIfam" id="TIGR01696">
    <property type="entry name" value="deoB"/>
    <property type="match status" value="1"/>
</dbReference>
<dbReference type="NCBIfam" id="NF003766">
    <property type="entry name" value="PRK05362.1"/>
    <property type="match status" value="1"/>
</dbReference>
<dbReference type="PANTHER" id="PTHR21110">
    <property type="entry name" value="PHOSPHOPENTOMUTASE"/>
    <property type="match status" value="1"/>
</dbReference>
<dbReference type="PANTHER" id="PTHR21110:SF0">
    <property type="entry name" value="PHOSPHOPENTOMUTASE"/>
    <property type="match status" value="1"/>
</dbReference>
<dbReference type="Pfam" id="PF01676">
    <property type="entry name" value="Metalloenzyme"/>
    <property type="match status" value="1"/>
</dbReference>
<dbReference type="PIRSF" id="PIRSF001491">
    <property type="entry name" value="Ppentomutase"/>
    <property type="match status" value="1"/>
</dbReference>
<dbReference type="SUPFAM" id="SSF53649">
    <property type="entry name" value="Alkaline phosphatase-like"/>
    <property type="match status" value="1"/>
</dbReference>
<dbReference type="SUPFAM" id="SSF143856">
    <property type="entry name" value="DeoB insert domain-like"/>
    <property type="match status" value="1"/>
</dbReference>
<gene>
    <name evidence="1" type="primary">deoB</name>
    <name type="ordered locus">spyM18_0951</name>
</gene>
<feature type="chain" id="PRO_0000199857" description="Phosphopentomutase">
    <location>
        <begin position="1"/>
        <end position="403"/>
    </location>
</feature>
<feature type="binding site" evidence="1">
    <location>
        <position position="13"/>
    </location>
    <ligand>
        <name>Mn(2+)</name>
        <dbReference type="ChEBI" id="CHEBI:29035"/>
        <label>1</label>
    </ligand>
</feature>
<feature type="binding site" evidence="1">
    <location>
        <position position="298"/>
    </location>
    <ligand>
        <name>Mn(2+)</name>
        <dbReference type="ChEBI" id="CHEBI:29035"/>
        <label>2</label>
    </ligand>
</feature>
<feature type="binding site" evidence="1">
    <location>
        <position position="303"/>
    </location>
    <ligand>
        <name>Mn(2+)</name>
        <dbReference type="ChEBI" id="CHEBI:29035"/>
        <label>2</label>
    </ligand>
</feature>
<feature type="binding site" evidence="1">
    <location>
        <position position="339"/>
    </location>
    <ligand>
        <name>Mn(2+)</name>
        <dbReference type="ChEBI" id="CHEBI:29035"/>
        <label>1</label>
    </ligand>
</feature>
<feature type="binding site" evidence="1">
    <location>
        <position position="340"/>
    </location>
    <ligand>
        <name>Mn(2+)</name>
        <dbReference type="ChEBI" id="CHEBI:29035"/>
        <label>1</label>
    </ligand>
</feature>
<feature type="binding site" evidence="1">
    <location>
        <position position="351"/>
    </location>
    <ligand>
        <name>Mn(2+)</name>
        <dbReference type="ChEBI" id="CHEBI:29035"/>
        <label>2</label>
    </ligand>
</feature>
<organism>
    <name type="scientific">Streptococcus pyogenes serotype M18 (strain MGAS8232)</name>
    <dbReference type="NCBI Taxonomy" id="186103"/>
    <lineage>
        <taxon>Bacteria</taxon>
        <taxon>Bacillati</taxon>
        <taxon>Bacillota</taxon>
        <taxon>Bacilli</taxon>
        <taxon>Lactobacillales</taxon>
        <taxon>Streptococcaceae</taxon>
        <taxon>Streptococcus</taxon>
    </lineage>
</organism>
<sequence length="403" mass="44208">MSKFNRIHLVVLDSVGIGAAPDADKFFNAGVADTDSDTLGHISETAGLSVPNMVKIGLGNISRPIPLKTVPTEDNPTGYVTKLEEVSLGKDTMTGHWEIMGLNITEPFDTFWNGFPEEILTKIEEFSGRKIIREANKPYSGTAVIDDFGPRQMETGELIVYTSADPVLQIAAHEDIIPVEELYKICEYARSITLERPALLGRIIARPYVGEPGNFTRTANRHDYAVSPFQDTVLNKLADAGVPTYAVGKINDIFNGSGITNDMGHNKSNSHGIDTLIKTLQLPEFTKGFSFTNLVDFDANFGHRRDPEGYRDCLHEFDNRLPEIIANMKEDDLLLITADHGNDPTYAGTDHTREYIPLLAYSASFTGNGLIPQGHFADISATVAENFGVDAAMIGESFLGHLK</sequence>
<evidence type="ECO:0000255" key="1">
    <source>
        <dbReference type="HAMAP-Rule" id="MF_00740"/>
    </source>
</evidence>